<dbReference type="EC" id="3.6.1.7"/>
<dbReference type="EMBL" id="CP000539">
    <property type="protein sequence ID" value="ABM44253.1"/>
    <property type="molecule type" value="Genomic_DNA"/>
</dbReference>
<dbReference type="SMR" id="A1WDC8"/>
<dbReference type="STRING" id="232721.Ajs_4152"/>
<dbReference type="KEGG" id="ajs:Ajs_4152"/>
<dbReference type="eggNOG" id="COG1254">
    <property type="taxonomic scope" value="Bacteria"/>
</dbReference>
<dbReference type="HOGENOM" id="CLU_141932_3_2_4"/>
<dbReference type="Proteomes" id="UP000000645">
    <property type="component" value="Chromosome"/>
</dbReference>
<dbReference type="GO" id="GO:0003998">
    <property type="term" value="F:acylphosphatase activity"/>
    <property type="evidence" value="ECO:0007669"/>
    <property type="project" value="UniProtKB-EC"/>
</dbReference>
<dbReference type="Gene3D" id="3.30.70.100">
    <property type="match status" value="1"/>
</dbReference>
<dbReference type="InterPro" id="IPR020456">
    <property type="entry name" value="Acylphosphatase"/>
</dbReference>
<dbReference type="InterPro" id="IPR001792">
    <property type="entry name" value="Acylphosphatase-like_dom"/>
</dbReference>
<dbReference type="InterPro" id="IPR036046">
    <property type="entry name" value="Acylphosphatase-like_dom_sf"/>
</dbReference>
<dbReference type="InterPro" id="IPR017968">
    <property type="entry name" value="Acylphosphatase_CS"/>
</dbReference>
<dbReference type="PANTHER" id="PTHR47268">
    <property type="entry name" value="ACYLPHOSPHATASE"/>
    <property type="match status" value="1"/>
</dbReference>
<dbReference type="PANTHER" id="PTHR47268:SF4">
    <property type="entry name" value="ACYLPHOSPHATASE"/>
    <property type="match status" value="1"/>
</dbReference>
<dbReference type="Pfam" id="PF00708">
    <property type="entry name" value="Acylphosphatase"/>
    <property type="match status" value="1"/>
</dbReference>
<dbReference type="PRINTS" id="PR00112">
    <property type="entry name" value="ACYLPHPHTASE"/>
</dbReference>
<dbReference type="SUPFAM" id="SSF54975">
    <property type="entry name" value="Acylphosphatase/BLUF domain-like"/>
    <property type="match status" value="1"/>
</dbReference>
<dbReference type="PROSITE" id="PS00151">
    <property type="entry name" value="ACYLPHOSPHATASE_2"/>
    <property type="match status" value="1"/>
</dbReference>
<dbReference type="PROSITE" id="PS51160">
    <property type="entry name" value="ACYLPHOSPHATASE_3"/>
    <property type="match status" value="1"/>
</dbReference>
<protein>
    <recommendedName>
        <fullName>Acylphosphatase</fullName>
        <ecNumber>3.6.1.7</ecNumber>
    </recommendedName>
    <alternativeName>
        <fullName>Acylphosphate phosphohydrolase</fullName>
    </alternativeName>
</protein>
<proteinExistence type="inferred from homology"/>
<accession>A1WDC8</accession>
<gene>
    <name type="primary">acyP</name>
    <name type="ordered locus">Ajs_4152</name>
</gene>
<evidence type="ECO:0000255" key="1">
    <source>
        <dbReference type="PROSITE-ProRule" id="PRU00520"/>
    </source>
</evidence>
<evidence type="ECO:0000305" key="2"/>
<sequence>MAESAASITRHLRIHGLVQGVYYRKSMTEAARRLGVQGWVRNRQDGTVEALASGAAPAVQALIDWAHEGPPAARVERVEVAEAPACDAQGFEQRETV</sequence>
<feature type="chain" id="PRO_0000326641" description="Acylphosphatase">
    <location>
        <begin position="1"/>
        <end position="97"/>
    </location>
</feature>
<feature type="domain" description="Acylphosphatase-like" evidence="1">
    <location>
        <begin position="9"/>
        <end position="95"/>
    </location>
</feature>
<feature type="active site" evidence="1">
    <location>
        <position position="24"/>
    </location>
</feature>
<feature type="active site" evidence="1">
    <location>
        <position position="42"/>
    </location>
</feature>
<name>ACYP_ACISJ</name>
<keyword id="KW-0378">Hydrolase</keyword>
<organism>
    <name type="scientific">Acidovorax sp. (strain JS42)</name>
    <dbReference type="NCBI Taxonomy" id="232721"/>
    <lineage>
        <taxon>Bacteria</taxon>
        <taxon>Pseudomonadati</taxon>
        <taxon>Pseudomonadota</taxon>
        <taxon>Betaproteobacteria</taxon>
        <taxon>Burkholderiales</taxon>
        <taxon>Comamonadaceae</taxon>
        <taxon>Acidovorax</taxon>
    </lineage>
</organism>
<comment type="catalytic activity">
    <reaction>
        <text>an acyl phosphate + H2O = a carboxylate + phosphate + H(+)</text>
        <dbReference type="Rhea" id="RHEA:14965"/>
        <dbReference type="ChEBI" id="CHEBI:15377"/>
        <dbReference type="ChEBI" id="CHEBI:15378"/>
        <dbReference type="ChEBI" id="CHEBI:29067"/>
        <dbReference type="ChEBI" id="CHEBI:43474"/>
        <dbReference type="ChEBI" id="CHEBI:59918"/>
        <dbReference type="EC" id="3.6.1.7"/>
    </reaction>
</comment>
<comment type="similarity">
    <text evidence="2">Belongs to the acylphosphatase family.</text>
</comment>
<reference key="1">
    <citation type="submission" date="2006-12" db="EMBL/GenBank/DDBJ databases">
        <title>Complete sequence of chromosome 1 of Acidovorax sp. JS42.</title>
        <authorList>
            <person name="Copeland A."/>
            <person name="Lucas S."/>
            <person name="Lapidus A."/>
            <person name="Barry K."/>
            <person name="Detter J.C."/>
            <person name="Glavina del Rio T."/>
            <person name="Dalin E."/>
            <person name="Tice H."/>
            <person name="Pitluck S."/>
            <person name="Chertkov O."/>
            <person name="Brettin T."/>
            <person name="Bruce D."/>
            <person name="Han C."/>
            <person name="Tapia R."/>
            <person name="Gilna P."/>
            <person name="Schmutz J."/>
            <person name="Larimer F."/>
            <person name="Land M."/>
            <person name="Hauser L."/>
            <person name="Kyrpides N."/>
            <person name="Kim E."/>
            <person name="Stahl D."/>
            <person name="Richardson P."/>
        </authorList>
    </citation>
    <scope>NUCLEOTIDE SEQUENCE [LARGE SCALE GENOMIC DNA]</scope>
    <source>
        <strain>JS42</strain>
    </source>
</reference>